<proteinExistence type="inferred from homology"/>
<keyword id="KW-1185">Reference proteome</keyword>
<keyword id="KW-0687">Ribonucleoprotein</keyword>
<keyword id="KW-0689">Ribosomal protein</keyword>
<keyword id="KW-0694">RNA-binding</keyword>
<keyword id="KW-0699">rRNA-binding</keyword>
<keyword id="KW-0820">tRNA-binding</keyword>
<gene>
    <name evidence="1" type="primary">rplE</name>
    <name type="ordered locus">STH3063</name>
</gene>
<sequence length="180" mass="20072">MANLKTKYQQEVAPALQKQFNYKNVMMIPRLEKIVINVGLGEAVQNAKALDAAVADIAAIAGQRPVITRAKKSISSFKIRTGMPIGCKVTLRGERMWDFLEKLIYVALPRVRDFRGVSPKSFDGRGNYALGLKEQLLFPEIDYDKVDKIRGMDVIIVTTAKTDEEAKALLKGLGMPFAER</sequence>
<comment type="function">
    <text evidence="1">This is one of the proteins that bind and probably mediate the attachment of the 5S RNA into the large ribosomal subunit, where it forms part of the central protuberance. In the 70S ribosome it contacts protein S13 of the 30S subunit (bridge B1b), connecting the 2 subunits; this bridge is implicated in subunit movement. Contacts the P site tRNA; the 5S rRNA and some of its associated proteins might help stabilize positioning of ribosome-bound tRNAs.</text>
</comment>
<comment type="subunit">
    <text evidence="1">Part of the 50S ribosomal subunit; part of the 5S rRNA/L5/L18/L25 subcomplex. Contacts the 5S rRNA and the P site tRNA. Forms a bridge to the 30S subunit in the 70S ribosome.</text>
</comment>
<comment type="similarity">
    <text evidence="1">Belongs to the universal ribosomal protein uL5 family.</text>
</comment>
<protein>
    <recommendedName>
        <fullName evidence="1">Large ribosomal subunit protein uL5</fullName>
    </recommendedName>
    <alternativeName>
        <fullName evidence="2">50S ribosomal protein L5</fullName>
    </alternativeName>
</protein>
<feature type="chain" id="PRO_0000243073" description="Large ribosomal subunit protein uL5">
    <location>
        <begin position="1"/>
        <end position="180"/>
    </location>
</feature>
<dbReference type="EMBL" id="AP006840">
    <property type="protein sequence ID" value="BAD42045.1"/>
    <property type="molecule type" value="Genomic_DNA"/>
</dbReference>
<dbReference type="RefSeq" id="WP_011197178.1">
    <property type="nucleotide sequence ID" value="NC_006177.1"/>
</dbReference>
<dbReference type="SMR" id="Q67JV5"/>
<dbReference type="STRING" id="292459.STH3063"/>
<dbReference type="KEGG" id="sth:STH3063"/>
<dbReference type="eggNOG" id="COG0094">
    <property type="taxonomic scope" value="Bacteria"/>
</dbReference>
<dbReference type="HOGENOM" id="CLU_061015_2_1_9"/>
<dbReference type="OrthoDB" id="9806626at2"/>
<dbReference type="Proteomes" id="UP000000417">
    <property type="component" value="Chromosome"/>
</dbReference>
<dbReference type="GO" id="GO:1990904">
    <property type="term" value="C:ribonucleoprotein complex"/>
    <property type="evidence" value="ECO:0007669"/>
    <property type="project" value="UniProtKB-KW"/>
</dbReference>
<dbReference type="GO" id="GO:0005840">
    <property type="term" value="C:ribosome"/>
    <property type="evidence" value="ECO:0007669"/>
    <property type="project" value="UniProtKB-KW"/>
</dbReference>
<dbReference type="GO" id="GO:0019843">
    <property type="term" value="F:rRNA binding"/>
    <property type="evidence" value="ECO:0007669"/>
    <property type="project" value="UniProtKB-UniRule"/>
</dbReference>
<dbReference type="GO" id="GO:0003735">
    <property type="term" value="F:structural constituent of ribosome"/>
    <property type="evidence" value="ECO:0007669"/>
    <property type="project" value="InterPro"/>
</dbReference>
<dbReference type="GO" id="GO:0000049">
    <property type="term" value="F:tRNA binding"/>
    <property type="evidence" value="ECO:0007669"/>
    <property type="project" value="UniProtKB-UniRule"/>
</dbReference>
<dbReference type="GO" id="GO:0006412">
    <property type="term" value="P:translation"/>
    <property type="evidence" value="ECO:0007669"/>
    <property type="project" value="UniProtKB-UniRule"/>
</dbReference>
<dbReference type="FunFam" id="3.30.1440.10:FF:000001">
    <property type="entry name" value="50S ribosomal protein L5"/>
    <property type="match status" value="1"/>
</dbReference>
<dbReference type="Gene3D" id="3.30.1440.10">
    <property type="match status" value="1"/>
</dbReference>
<dbReference type="HAMAP" id="MF_01333_B">
    <property type="entry name" value="Ribosomal_uL5_B"/>
    <property type="match status" value="1"/>
</dbReference>
<dbReference type="InterPro" id="IPR002132">
    <property type="entry name" value="Ribosomal_uL5"/>
</dbReference>
<dbReference type="InterPro" id="IPR020930">
    <property type="entry name" value="Ribosomal_uL5_bac-type"/>
</dbReference>
<dbReference type="InterPro" id="IPR031309">
    <property type="entry name" value="Ribosomal_uL5_C"/>
</dbReference>
<dbReference type="InterPro" id="IPR020929">
    <property type="entry name" value="Ribosomal_uL5_CS"/>
</dbReference>
<dbReference type="InterPro" id="IPR022803">
    <property type="entry name" value="Ribosomal_uL5_dom_sf"/>
</dbReference>
<dbReference type="InterPro" id="IPR031310">
    <property type="entry name" value="Ribosomal_uL5_N"/>
</dbReference>
<dbReference type="NCBIfam" id="NF000585">
    <property type="entry name" value="PRK00010.1"/>
    <property type="match status" value="1"/>
</dbReference>
<dbReference type="PANTHER" id="PTHR11994">
    <property type="entry name" value="60S RIBOSOMAL PROTEIN L11-RELATED"/>
    <property type="match status" value="1"/>
</dbReference>
<dbReference type="Pfam" id="PF00281">
    <property type="entry name" value="Ribosomal_L5"/>
    <property type="match status" value="1"/>
</dbReference>
<dbReference type="Pfam" id="PF00673">
    <property type="entry name" value="Ribosomal_L5_C"/>
    <property type="match status" value="1"/>
</dbReference>
<dbReference type="PIRSF" id="PIRSF002161">
    <property type="entry name" value="Ribosomal_L5"/>
    <property type="match status" value="1"/>
</dbReference>
<dbReference type="SUPFAM" id="SSF55282">
    <property type="entry name" value="RL5-like"/>
    <property type="match status" value="1"/>
</dbReference>
<dbReference type="PROSITE" id="PS00358">
    <property type="entry name" value="RIBOSOMAL_L5"/>
    <property type="match status" value="1"/>
</dbReference>
<reference key="1">
    <citation type="journal article" date="2004" name="Nucleic Acids Res.">
        <title>Genome sequence of Symbiobacterium thermophilum, an uncultivable bacterium that depends on microbial commensalism.</title>
        <authorList>
            <person name="Ueda K."/>
            <person name="Yamashita A."/>
            <person name="Ishikawa J."/>
            <person name="Shimada M."/>
            <person name="Watsuji T."/>
            <person name="Morimura K."/>
            <person name="Ikeda H."/>
            <person name="Hattori M."/>
            <person name="Beppu T."/>
        </authorList>
    </citation>
    <scope>NUCLEOTIDE SEQUENCE [LARGE SCALE GENOMIC DNA]</scope>
    <source>
        <strain>DSM 24528 / JCM 14929 / IAM 14863 / T</strain>
    </source>
</reference>
<accession>Q67JV5</accession>
<evidence type="ECO:0000255" key="1">
    <source>
        <dbReference type="HAMAP-Rule" id="MF_01333"/>
    </source>
</evidence>
<evidence type="ECO:0000305" key="2"/>
<organism>
    <name type="scientific">Symbiobacterium thermophilum (strain DSM 24528 / JCM 14929 / IAM 14863 / T)</name>
    <dbReference type="NCBI Taxonomy" id="292459"/>
    <lineage>
        <taxon>Bacteria</taxon>
        <taxon>Bacillati</taxon>
        <taxon>Bacillota</taxon>
        <taxon>Clostridia</taxon>
        <taxon>Eubacteriales</taxon>
        <taxon>Symbiobacteriaceae</taxon>
        <taxon>Symbiobacterium</taxon>
    </lineage>
</organism>
<name>RL5_SYMTH</name>